<dbReference type="EMBL" id="U12980">
    <property type="protein sequence ID" value="AAC05001.1"/>
    <property type="molecule type" value="Genomic_DNA"/>
</dbReference>
<dbReference type="EMBL" id="X62577">
    <property type="status" value="NOT_ANNOTATED_CDS"/>
    <property type="molecule type" value="Genomic_DNA"/>
</dbReference>
<dbReference type="EMBL" id="BK006935">
    <property type="protein sequence ID" value="DAA06957.1"/>
    <property type="molecule type" value="Genomic_DNA"/>
</dbReference>
<dbReference type="PIR" id="S70294">
    <property type="entry name" value="S70294"/>
</dbReference>
<dbReference type="RefSeq" id="NP_009371.1">
    <property type="nucleotide sequence ID" value="NM_001178176.1"/>
</dbReference>
<dbReference type="SMR" id="P39732"/>
<dbReference type="BioGRID" id="31735">
    <property type="interactions" value="63"/>
</dbReference>
<dbReference type="DIP" id="DIP-6268N"/>
<dbReference type="FunCoup" id="P39732">
    <property type="interactions" value="134"/>
</dbReference>
<dbReference type="IntAct" id="P39732">
    <property type="interactions" value="8"/>
</dbReference>
<dbReference type="MINT" id="P39732"/>
<dbReference type="STRING" id="4932.YAL031C"/>
<dbReference type="GlyGen" id="P39732">
    <property type="glycosylation" value="1 site"/>
</dbReference>
<dbReference type="iPTMnet" id="P39732"/>
<dbReference type="PaxDb" id="4932-YAL031C"/>
<dbReference type="PeptideAtlas" id="P39732"/>
<dbReference type="EnsemblFungi" id="YAL031C_mRNA">
    <property type="protein sequence ID" value="YAL031C"/>
    <property type="gene ID" value="YAL031C"/>
</dbReference>
<dbReference type="GeneID" id="851202"/>
<dbReference type="KEGG" id="sce:YAL031C"/>
<dbReference type="AGR" id="SGD:S000000029"/>
<dbReference type="SGD" id="S000000029">
    <property type="gene designation" value="GIP4"/>
</dbReference>
<dbReference type="VEuPathDB" id="FungiDB:YAL031C"/>
<dbReference type="eggNOG" id="ENOG502QRIU">
    <property type="taxonomic scope" value="Eukaryota"/>
</dbReference>
<dbReference type="HOGENOM" id="CLU_021324_0_0_1"/>
<dbReference type="InParanoid" id="P39732"/>
<dbReference type="OMA" id="WYKKPAV"/>
<dbReference type="OrthoDB" id="3973067at2759"/>
<dbReference type="BioCyc" id="YEAST:G3O-28842-MONOMER"/>
<dbReference type="BioGRID-ORCS" id="851202">
    <property type="hits" value="0 hits in 10 CRISPR screens"/>
</dbReference>
<dbReference type="PRO" id="PR:P39732"/>
<dbReference type="Proteomes" id="UP000002311">
    <property type="component" value="Chromosome I"/>
</dbReference>
<dbReference type="RNAct" id="P39732">
    <property type="molecule type" value="protein"/>
</dbReference>
<dbReference type="GO" id="GO:0005737">
    <property type="term" value="C:cytoplasm"/>
    <property type="evidence" value="ECO:0007005"/>
    <property type="project" value="SGD"/>
</dbReference>
<dbReference type="GO" id="GO:0008157">
    <property type="term" value="F:protein phosphatase 1 binding"/>
    <property type="evidence" value="ECO:0000314"/>
    <property type="project" value="SGD"/>
</dbReference>
<dbReference type="GO" id="GO:0019888">
    <property type="term" value="F:protein phosphatase regulator activity"/>
    <property type="evidence" value="ECO:0000315"/>
    <property type="project" value="SGD"/>
</dbReference>
<dbReference type="GO" id="GO:0007059">
    <property type="term" value="P:chromosome segregation"/>
    <property type="evidence" value="ECO:0000315"/>
    <property type="project" value="SGD"/>
</dbReference>
<dbReference type="InterPro" id="IPR026241">
    <property type="entry name" value="GIP4"/>
</dbReference>
<dbReference type="PRINTS" id="PR02082">
    <property type="entry name" value="GLC7IP4"/>
</dbReference>
<organism>
    <name type="scientific">Saccharomyces cerevisiae (strain ATCC 204508 / S288c)</name>
    <name type="common">Baker's yeast</name>
    <dbReference type="NCBI Taxonomy" id="559292"/>
    <lineage>
        <taxon>Eukaryota</taxon>
        <taxon>Fungi</taxon>
        <taxon>Dikarya</taxon>
        <taxon>Ascomycota</taxon>
        <taxon>Saccharomycotina</taxon>
        <taxon>Saccharomycetes</taxon>
        <taxon>Saccharomycetales</taxon>
        <taxon>Saccharomycetaceae</taxon>
        <taxon>Saccharomyces</taxon>
    </lineage>
</organism>
<feature type="chain" id="PRO_0000202416" description="GLC7-interacting protein 4">
    <location>
        <begin position="1"/>
        <end position="760"/>
    </location>
</feature>
<feature type="region of interest" description="Disordered" evidence="1">
    <location>
        <begin position="449"/>
        <end position="573"/>
    </location>
</feature>
<feature type="region of interest" description="Disordered" evidence="1">
    <location>
        <begin position="593"/>
        <end position="626"/>
    </location>
</feature>
<feature type="compositionally biased region" description="Low complexity" evidence="1">
    <location>
        <begin position="454"/>
        <end position="474"/>
    </location>
</feature>
<feature type="compositionally biased region" description="Low complexity" evidence="1">
    <location>
        <begin position="494"/>
        <end position="506"/>
    </location>
</feature>
<feature type="compositionally biased region" description="Basic and acidic residues" evidence="1">
    <location>
        <begin position="512"/>
        <end position="525"/>
    </location>
</feature>
<feature type="compositionally biased region" description="Polar residues" evidence="1">
    <location>
        <begin position="534"/>
        <end position="554"/>
    </location>
</feature>
<feature type="compositionally biased region" description="Low complexity" evidence="1">
    <location>
        <begin position="561"/>
        <end position="573"/>
    </location>
</feature>
<feature type="compositionally biased region" description="Low complexity" evidence="1">
    <location>
        <begin position="594"/>
        <end position="626"/>
    </location>
</feature>
<feature type="modified residue" description="Phosphoserine" evidence="6">
    <location>
        <position position="497"/>
    </location>
</feature>
<feature type="modified residue" description="Phosphoserine" evidence="6">
    <location>
        <position position="501"/>
    </location>
</feature>
<feature type="modified residue" description="Phosphoserine" evidence="7 8">
    <location>
        <position position="609"/>
    </location>
</feature>
<name>GIP4_YEAST</name>
<accession>P39732</accession>
<accession>D6VPI7</accession>
<sequence length="760" mass="86636">MVDVQKRKKLLAKAAASASIPAIKGSVPLDSYDIKIIQYKNALYKLNELNRLLNVLVPHLKKKRDNDESYKIIPLVNFILSLCEGPIFNVSPVLAKRYHLLCRFQLIKLSEVQQRLSTNFIDVEGWMFPEEVPLDHYKSCIYNNSLQWKILNSLSCIAQNAIKIYNAKLRQILLERDAYKARSLPFDTSIIEDLLNPVEMTLILDLAVLINDPVRDKSTHSFYKLQWQVMEKLNSCVHSKIFPILRTYYNQLQKFSETRPTSLSNLQKDLPHWEWTLHRIYTFHLRVFSVLCVIISFSRQIFLPNKQHFLDIKTRLSSENVYHYDLIICELMALLSPECDDVTALFELQENLKFWTQTARTDNNSSRTPIFHLQPGLVVELFNNHICKIIPKLRSIMGLLSNWMDCWKYIEKNYKTFDETNDLRENLKEKLERDKALYLEVKNAKSKLKKKPSITKLPASSSPSPSPTSSASPSRQASLESIRTRARAHLASNSSRSPSVSPVRTTFNNKNAETKKSVVSPEKRKLINGRRPRSSSLQSYTNKQQTSYLNSTRHPSIAPPSKLNNQRSNSLQSSTMTLNQKIVQDTVRHLMNKSASTPNPSASSSLAPSPKVSSINNTSSGKSSSTLIANSSDTLAIETLTLDPESNSSELSIKRVRFAGVPPMTEAENPKPTKVGWYKKPAVLHYPPIPASAMIKPLQHKSKYNTLRQEEGFTFRKSLRDGLEWENGESGSETTMMPFGIEIKESTGHRIASKIRSKLR</sequence>
<comment type="function">
    <text evidence="4">GLC7 phosphatase-regulatory protein involved in GLC7 subcellular redistribution and chromosome segregation.</text>
</comment>
<comment type="subunit">
    <text evidence="4">Interacts with GLC7.</text>
</comment>
<comment type="interaction">
    <interactant intactId="EBI-20636">
        <id>P39732</id>
    </interactant>
    <interactant intactId="EBI-13715">
        <id>P32598</id>
        <label>GLC7</label>
    </interactant>
    <organismsDiffer>false</organismsDiffer>
    <experiments>5</experiments>
</comment>
<comment type="subcellular location">
    <subcellularLocation>
        <location evidence="2">Cytoplasm</location>
    </subcellularLocation>
</comment>
<comment type="miscellaneous">
    <text evidence="3">Present with 227 molecules/cell in log phase SD medium.</text>
</comment>
<comment type="similarity">
    <text evidence="5">Belongs to the GIP4 family.</text>
</comment>
<protein>
    <recommendedName>
        <fullName>GLC7-interacting protein 4</fullName>
    </recommendedName>
</protein>
<reference key="1">
    <citation type="journal article" date="1995" name="Proc. Natl. Acad. Sci. U.S.A.">
        <title>The nucleotide sequence of chromosome I from Saccharomyces cerevisiae.</title>
        <authorList>
            <person name="Bussey H."/>
            <person name="Kaback D.B."/>
            <person name="Zhong W.-W."/>
            <person name="Vo D.H."/>
            <person name="Clark M.W."/>
            <person name="Fortin N."/>
            <person name="Hall J."/>
            <person name="Ouellette B.F.F."/>
            <person name="Keng T."/>
            <person name="Barton A.B."/>
            <person name="Su Y."/>
            <person name="Davies C.J."/>
            <person name="Storms R.K."/>
        </authorList>
    </citation>
    <scope>NUCLEOTIDE SEQUENCE [LARGE SCALE GENOMIC DNA]</scope>
    <source>
        <strain>ATCC 204508 / S288c</strain>
    </source>
</reference>
<reference key="2">
    <citation type="submission" date="1996-04" db="EMBL/GenBank/DDBJ databases">
        <authorList>
            <person name="Vo D.T."/>
        </authorList>
    </citation>
    <scope>SEQUENCE REVISION</scope>
</reference>
<reference key="3">
    <citation type="journal article" date="2014" name="G3 (Bethesda)">
        <title>The reference genome sequence of Saccharomyces cerevisiae: Then and now.</title>
        <authorList>
            <person name="Engel S.R."/>
            <person name="Dietrich F.S."/>
            <person name="Fisk D.G."/>
            <person name="Binkley G."/>
            <person name="Balakrishnan R."/>
            <person name="Costanzo M.C."/>
            <person name="Dwight S.S."/>
            <person name="Hitz B.C."/>
            <person name="Karra K."/>
            <person name="Nash R.S."/>
            <person name="Weng S."/>
            <person name="Wong E.D."/>
            <person name="Lloyd P."/>
            <person name="Skrzypek M.S."/>
            <person name="Miyasato S.R."/>
            <person name="Simison M."/>
            <person name="Cherry J.M."/>
        </authorList>
    </citation>
    <scope>GENOME REANNOTATION</scope>
    <source>
        <strain>ATCC 204508 / S288c</strain>
    </source>
</reference>
<reference key="4">
    <citation type="journal article" date="1992" name="J. Mol. Biol.">
        <title>Molecular analysis of Saccharomyces cerevisiae chromosome I. On the number of genes and the identification of essential genes using temperature-sensitive-lethal mutations.</title>
        <authorList>
            <person name="Harris S.D."/>
            <person name="Cheng J."/>
            <person name="Pugh T.A."/>
            <person name="Pringle J.R."/>
        </authorList>
    </citation>
    <scope>NUCLEOTIDE SEQUENCE [GENOMIC DNA] OF 550-760</scope>
</reference>
<reference key="5">
    <citation type="journal article" date="2003" name="Nature">
        <title>Global analysis of protein localization in budding yeast.</title>
        <authorList>
            <person name="Huh W.-K."/>
            <person name="Falvo J.V."/>
            <person name="Gerke L.C."/>
            <person name="Carroll A.S."/>
            <person name="Howson R.W."/>
            <person name="Weissman J.S."/>
            <person name="O'Shea E.K."/>
        </authorList>
    </citation>
    <scope>SUBCELLULAR LOCATION [LARGE SCALE ANALYSIS]</scope>
</reference>
<reference key="6">
    <citation type="journal article" date="2003" name="Nature">
        <title>Global analysis of protein expression in yeast.</title>
        <authorList>
            <person name="Ghaemmaghami S."/>
            <person name="Huh W.-K."/>
            <person name="Bower K."/>
            <person name="Howson R.W."/>
            <person name="Belle A."/>
            <person name="Dephoure N."/>
            <person name="O'Shea E.K."/>
            <person name="Weissman J.S."/>
        </authorList>
    </citation>
    <scope>LEVEL OF PROTEIN EXPRESSION [LARGE SCALE ANALYSIS]</scope>
</reference>
<reference key="7">
    <citation type="journal article" date="2006" name="Mol. Cell. Biol.">
        <title>Glc7/protein phosphatase 1 regulatory subunits can oppose the Ipl1/aurora protein kinase by redistributing Glc7.</title>
        <authorList>
            <person name="Pinsky B.A."/>
            <person name="Kotwaliwale C.V."/>
            <person name="Tatsutani S.Y."/>
            <person name="Breed C.A."/>
            <person name="Biggins S."/>
        </authorList>
    </citation>
    <scope>INTERACTION WITH GLC7</scope>
    <scope>FUNCTION</scope>
</reference>
<reference key="8">
    <citation type="journal article" date="2007" name="J. Proteome Res.">
        <title>Large-scale phosphorylation analysis of alpha-factor-arrested Saccharomyces cerevisiae.</title>
        <authorList>
            <person name="Li X."/>
            <person name="Gerber S.A."/>
            <person name="Rudner A.D."/>
            <person name="Beausoleil S.A."/>
            <person name="Haas W."/>
            <person name="Villen J."/>
            <person name="Elias J.E."/>
            <person name="Gygi S.P."/>
        </authorList>
    </citation>
    <scope>PHOSPHORYLATION [LARGE SCALE ANALYSIS] AT SER-497 AND SER-501</scope>
    <scope>IDENTIFICATION BY MASS SPECTROMETRY [LARGE SCALE ANALYSIS]</scope>
    <source>
        <strain>ADR376</strain>
    </source>
</reference>
<reference key="9">
    <citation type="journal article" date="2008" name="Mol. Cell. Proteomics">
        <title>A multidimensional chromatography technology for in-depth phosphoproteome analysis.</title>
        <authorList>
            <person name="Albuquerque C.P."/>
            <person name="Smolka M.B."/>
            <person name="Payne S.H."/>
            <person name="Bafna V."/>
            <person name="Eng J."/>
            <person name="Zhou H."/>
        </authorList>
    </citation>
    <scope>PHOSPHORYLATION [LARGE SCALE ANALYSIS] AT SER-609</scope>
    <scope>IDENTIFICATION BY MASS SPECTROMETRY [LARGE SCALE ANALYSIS]</scope>
</reference>
<reference key="10">
    <citation type="journal article" date="2009" name="Science">
        <title>Global analysis of Cdk1 substrate phosphorylation sites provides insights into evolution.</title>
        <authorList>
            <person name="Holt L.J."/>
            <person name="Tuch B.B."/>
            <person name="Villen J."/>
            <person name="Johnson A.D."/>
            <person name="Gygi S.P."/>
            <person name="Morgan D.O."/>
        </authorList>
    </citation>
    <scope>PHOSPHORYLATION [LARGE SCALE ANALYSIS] AT SER-609</scope>
    <scope>IDENTIFICATION BY MASS SPECTROMETRY [LARGE SCALE ANALYSIS]</scope>
</reference>
<keyword id="KW-0963">Cytoplasm</keyword>
<keyword id="KW-0597">Phosphoprotein</keyword>
<keyword id="KW-1185">Reference proteome</keyword>
<evidence type="ECO:0000256" key="1">
    <source>
        <dbReference type="SAM" id="MobiDB-lite"/>
    </source>
</evidence>
<evidence type="ECO:0000269" key="2">
    <source>
    </source>
</evidence>
<evidence type="ECO:0000269" key="3">
    <source>
    </source>
</evidence>
<evidence type="ECO:0000269" key="4">
    <source>
    </source>
</evidence>
<evidence type="ECO:0000305" key="5"/>
<evidence type="ECO:0007744" key="6">
    <source>
    </source>
</evidence>
<evidence type="ECO:0007744" key="7">
    <source>
    </source>
</evidence>
<evidence type="ECO:0007744" key="8">
    <source>
    </source>
</evidence>
<gene>
    <name type="primary">GIP4</name>
    <name type="synonym">FUN21</name>
    <name type="ordered locus">YAL031C</name>
</gene>
<proteinExistence type="evidence at protein level"/>